<feature type="chain" id="PRO_0000132468" description="Small ribosomal subunit protein uS4">
    <location>
        <begin position="1"/>
        <end position="204"/>
    </location>
</feature>
<feature type="domain" description="S4 RNA-binding" evidence="1">
    <location>
        <begin position="92"/>
        <end position="157"/>
    </location>
</feature>
<proteinExistence type="inferred from homology"/>
<dbReference type="EMBL" id="BA000030">
    <property type="protein sequence ID" value="BAC74558.1"/>
    <property type="molecule type" value="Genomic_DNA"/>
</dbReference>
<dbReference type="RefSeq" id="WP_010988245.1">
    <property type="nucleotide sequence ID" value="NZ_JZJK01000082.1"/>
</dbReference>
<dbReference type="SMR" id="Q827S7"/>
<dbReference type="GeneID" id="41543922"/>
<dbReference type="KEGG" id="sma:SAVERM_6847"/>
<dbReference type="eggNOG" id="COG0522">
    <property type="taxonomic scope" value="Bacteria"/>
</dbReference>
<dbReference type="HOGENOM" id="CLU_092403_0_3_11"/>
<dbReference type="OrthoDB" id="9803672at2"/>
<dbReference type="Proteomes" id="UP000000428">
    <property type="component" value="Chromosome"/>
</dbReference>
<dbReference type="GO" id="GO:0015935">
    <property type="term" value="C:small ribosomal subunit"/>
    <property type="evidence" value="ECO:0007669"/>
    <property type="project" value="InterPro"/>
</dbReference>
<dbReference type="GO" id="GO:0019843">
    <property type="term" value="F:rRNA binding"/>
    <property type="evidence" value="ECO:0007669"/>
    <property type="project" value="UniProtKB-UniRule"/>
</dbReference>
<dbReference type="GO" id="GO:0003735">
    <property type="term" value="F:structural constituent of ribosome"/>
    <property type="evidence" value="ECO:0007669"/>
    <property type="project" value="InterPro"/>
</dbReference>
<dbReference type="GO" id="GO:0042274">
    <property type="term" value="P:ribosomal small subunit biogenesis"/>
    <property type="evidence" value="ECO:0007669"/>
    <property type="project" value="TreeGrafter"/>
</dbReference>
<dbReference type="GO" id="GO:0006412">
    <property type="term" value="P:translation"/>
    <property type="evidence" value="ECO:0007669"/>
    <property type="project" value="UniProtKB-UniRule"/>
</dbReference>
<dbReference type="CDD" id="cd00165">
    <property type="entry name" value="S4"/>
    <property type="match status" value="1"/>
</dbReference>
<dbReference type="FunFam" id="3.10.290.10:FF:000001">
    <property type="entry name" value="30S ribosomal protein S4"/>
    <property type="match status" value="1"/>
</dbReference>
<dbReference type="Gene3D" id="1.10.1050.10">
    <property type="entry name" value="Ribosomal Protein S4 Delta 41, Chain A, domain 1"/>
    <property type="match status" value="1"/>
</dbReference>
<dbReference type="Gene3D" id="3.10.290.10">
    <property type="entry name" value="RNA-binding S4 domain"/>
    <property type="match status" value="1"/>
</dbReference>
<dbReference type="HAMAP" id="MF_01306_B">
    <property type="entry name" value="Ribosomal_uS4_B"/>
    <property type="match status" value="1"/>
</dbReference>
<dbReference type="InterPro" id="IPR022801">
    <property type="entry name" value="Ribosomal_uS4"/>
</dbReference>
<dbReference type="InterPro" id="IPR005709">
    <property type="entry name" value="Ribosomal_uS4_bac-type"/>
</dbReference>
<dbReference type="InterPro" id="IPR018079">
    <property type="entry name" value="Ribosomal_uS4_CS"/>
</dbReference>
<dbReference type="InterPro" id="IPR001912">
    <property type="entry name" value="Ribosomal_uS4_N"/>
</dbReference>
<dbReference type="InterPro" id="IPR002942">
    <property type="entry name" value="S4_RNA-bd"/>
</dbReference>
<dbReference type="InterPro" id="IPR036986">
    <property type="entry name" value="S4_RNA-bd_sf"/>
</dbReference>
<dbReference type="NCBIfam" id="NF003717">
    <property type="entry name" value="PRK05327.1"/>
    <property type="match status" value="1"/>
</dbReference>
<dbReference type="NCBIfam" id="TIGR01017">
    <property type="entry name" value="rpsD_bact"/>
    <property type="match status" value="1"/>
</dbReference>
<dbReference type="PANTHER" id="PTHR11831">
    <property type="entry name" value="30S 40S RIBOSOMAL PROTEIN"/>
    <property type="match status" value="1"/>
</dbReference>
<dbReference type="PANTHER" id="PTHR11831:SF4">
    <property type="entry name" value="SMALL RIBOSOMAL SUBUNIT PROTEIN US4M"/>
    <property type="match status" value="1"/>
</dbReference>
<dbReference type="Pfam" id="PF00163">
    <property type="entry name" value="Ribosomal_S4"/>
    <property type="match status" value="1"/>
</dbReference>
<dbReference type="Pfam" id="PF01479">
    <property type="entry name" value="S4"/>
    <property type="match status" value="1"/>
</dbReference>
<dbReference type="SMART" id="SM01390">
    <property type="entry name" value="Ribosomal_S4"/>
    <property type="match status" value="1"/>
</dbReference>
<dbReference type="SMART" id="SM00363">
    <property type="entry name" value="S4"/>
    <property type="match status" value="1"/>
</dbReference>
<dbReference type="SUPFAM" id="SSF55174">
    <property type="entry name" value="Alpha-L RNA-binding motif"/>
    <property type="match status" value="1"/>
</dbReference>
<dbReference type="PROSITE" id="PS00632">
    <property type="entry name" value="RIBOSOMAL_S4"/>
    <property type="match status" value="1"/>
</dbReference>
<dbReference type="PROSITE" id="PS50889">
    <property type="entry name" value="S4"/>
    <property type="match status" value="1"/>
</dbReference>
<reference key="1">
    <citation type="journal article" date="2001" name="Proc. Natl. Acad. Sci. U.S.A.">
        <title>Genome sequence of an industrial microorganism Streptomyces avermitilis: deducing the ability of producing secondary metabolites.</title>
        <authorList>
            <person name="Omura S."/>
            <person name="Ikeda H."/>
            <person name="Ishikawa J."/>
            <person name="Hanamoto A."/>
            <person name="Takahashi C."/>
            <person name="Shinose M."/>
            <person name="Takahashi Y."/>
            <person name="Horikawa H."/>
            <person name="Nakazawa H."/>
            <person name="Osonoe T."/>
            <person name="Kikuchi H."/>
            <person name="Shiba T."/>
            <person name="Sakaki Y."/>
            <person name="Hattori M."/>
        </authorList>
    </citation>
    <scope>NUCLEOTIDE SEQUENCE [LARGE SCALE GENOMIC DNA]</scope>
    <source>
        <strain>ATCC 31267 / DSM 46492 / JCM 5070 / NBRC 14893 / NCIMB 12804 / NRRL 8165 / MA-4680</strain>
    </source>
</reference>
<reference key="2">
    <citation type="journal article" date="2003" name="Nat. Biotechnol.">
        <title>Complete genome sequence and comparative analysis of the industrial microorganism Streptomyces avermitilis.</title>
        <authorList>
            <person name="Ikeda H."/>
            <person name="Ishikawa J."/>
            <person name="Hanamoto A."/>
            <person name="Shinose M."/>
            <person name="Kikuchi H."/>
            <person name="Shiba T."/>
            <person name="Sakaki Y."/>
            <person name="Hattori M."/>
            <person name="Omura S."/>
        </authorList>
    </citation>
    <scope>NUCLEOTIDE SEQUENCE [LARGE SCALE GENOMIC DNA]</scope>
    <source>
        <strain>ATCC 31267 / DSM 46492 / JCM 5070 / NBRC 14893 / NCIMB 12804 / NRRL 8165 / MA-4680</strain>
    </source>
</reference>
<comment type="function">
    <text evidence="1">One of the primary rRNA binding proteins, it binds directly to 16S rRNA where it nucleates assembly of the body of the 30S subunit.</text>
</comment>
<comment type="function">
    <text evidence="1">With S5 and S12 plays an important role in translational accuracy.</text>
</comment>
<comment type="subunit">
    <text evidence="1">Part of the 30S ribosomal subunit. Contacts protein S5. The interaction surface between S4 and S5 is involved in control of translational fidelity.</text>
</comment>
<comment type="similarity">
    <text evidence="1">Belongs to the universal ribosomal protein uS4 family.</text>
</comment>
<protein>
    <recommendedName>
        <fullName evidence="1">Small ribosomal subunit protein uS4</fullName>
    </recommendedName>
    <alternativeName>
        <fullName evidence="2">30S ribosomal protein S4</fullName>
    </alternativeName>
</protein>
<gene>
    <name evidence="1" type="primary">rpsD</name>
    <name type="ordered locus">SAV_6847</name>
</gene>
<evidence type="ECO:0000255" key="1">
    <source>
        <dbReference type="HAMAP-Rule" id="MF_01306"/>
    </source>
</evidence>
<evidence type="ECO:0000305" key="2"/>
<keyword id="KW-1185">Reference proteome</keyword>
<keyword id="KW-0687">Ribonucleoprotein</keyword>
<keyword id="KW-0689">Ribosomal protein</keyword>
<keyword id="KW-0694">RNA-binding</keyword>
<keyword id="KW-0699">rRNA-binding</keyword>
<organism>
    <name type="scientific">Streptomyces avermitilis (strain ATCC 31267 / DSM 46492 / JCM 5070 / NBRC 14893 / NCIMB 12804 / NRRL 8165 / MA-4680)</name>
    <dbReference type="NCBI Taxonomy" id="227882"/>
    <lineage>
        <taxon>Bacteria</taxon>
        <taxon>Bacillati</taxon>
        <taxon>Actinomycetota</taxon>
        <taxon>Actinomycetes</taxon>
        <taxon>Kitasatosporales</taxon>
        <taxon>Streptomycetaceae</taxon>
        <taxon>Streptomyces</taxon>
    </lineage>
</organism>
<name>RS4_STRAW</name>
<accession>Q827S7</accession>
<sequence>MANQSRPKVKKSRALGIALTPKAVKYFEARPYPPGEHGRGRKQNSDYKVRLLEKQRLRAQYDVSERQLVRAYERAAKTQGKTGEALVIELERRLDALVLRSGIARTIYQARQMVVHGHIEVNGQKVDKPSFRVKPDDVVMVRERSRQKPLFEVAREGGFAPDGETPRYLQVNLRALAFRLDREPNRKEIPVICDEQLVVEYYAR</sequence>